<evidence type="ECO:0000255" key="1">
    <source>
        <dbReference type="HAMAP-Rule" id="MF_00082"/>
    </source>
</evidence>
<organism>
    <name type="scientific">Campylobacter fetus subsp. fetus (strain 82-40)</name>
    <dbReference type="NCBI Taxonomy" id="360106"/>
    <lineage>
        <taxon>Bacteria</taxon>
        <taxon>Pseudomonadati</taxon>
        <taxon>Campylobacterota</taxon>
        <taxon>Epsilonproteobacteria</taxon>
        <taxon>Campylobacterales</taxon>
        <taxon>Campylobacteraceae</taxon>
        <taxon>Campylobacter</taxon>
    </lineage>
</organism>
<gene>
    <name evidence="1" type="primary">argB</name>
    <name type="ordered locus">CFF8240_1081</name>
</gene>
<sequence>MLKSIRTAEIILSALPYIQKFRDEIFVIKYGGAAQIDEKLKNNFARDIVLLQLVGIKAVIVHGGGKKINSFLERLNLKSEFIDGLRVTDKDAMEVVEMTLSGLINKEITSLLNKHGARAIGISGKDDNMLKAKSLDDGKYGFVGEITDVNENVILTIINDGLIPVIAPIAIGSEYETYNINADLCASAIASKLKARKVIFLSDIKGVLDKDEKLISKLNETSINELKNNGAISGGMIPKIDACLECIKSGVGAAHIIDGKIPHSLLLEIFTDEGIGSVIK</sequence>
<proteinExistence type="inferred from homology"/>
<accession>A0RPV9</accession>
<comment type="function">
    <text evidence="1">Catalyzes the ATP-dependent phosphorylation of N-acetyl-L-glutamate.</text>
</comment>
<comment type="catalytic activity">
    <reaction evidence="1">
        <text>N-acetyl-L-glutamate + ATP = N-acetyl-L-glutamyl 5-phosphate + ADP</text>
        <dbReference type="Rhea" id="RHEA:14629"/>
        <dbReference type="ChEBI" id="CHEBI:30616"/>
        <dbReference type="ChEBI" id="CHEBI:44337"/>
        <dbReference type="ChEBI" id="CHEBI:57936"/>
        <dbReference type="ChEBI" id="CHEBI:456216"/>
        <dbReference type="EC" id="2.7.2.8"/>
    </reaction>
</comment>
<comment type="pathway">
    <text evidence="1">Amino-acid biosynthesis; L-arginine biosynthesis; N(2)-acetyl-L-ornithine from L-glutamate: step 2/4.</text>
</comment>
<comment type="subcellular location">
    <subcellularLocation>
        <location evidence="1">Cytoplasm</location>
    </subcellularLocation>
</comment>
<comment type="similarity">
    <text evidence="1">Belongs to the acetylglutamate kinase family. ArgB subfamily.</text>
</comment>
<feature type="chain" id="PRO_1000010493" description="Acetylglutamate kinase">
    <location>
        <begin position="1"/>
        <end position="280"/>
    </location>
</feature>
<feature type="binding site" evidence="1">
    <location>
        <begin position="64"/>
        <end position="65"/>
    </location>
    <ligand>
        <name>substrate</name>
    </ligand>
</feature>
<feature type="binding site" evidence="1">
    <location>
        <position position="86"/>
    </location>
    <ligand>
        <name>substrate</name>
    </ligand>
</feature>
<feature type="binding site" evidence="1">
    <location>
        <position position="179"/>
    </location>
    <ligand>
        <name>substrate</name>
    </ligand>
</feature>
<feature type="site" description="Transition state stabilizer" evidence="1">
    <location>
        <position position="29"/>
    </location>
</feature>
<feature type="site" description="Transition state stabilizer" evidence="1">
    <location>
        <position position="239"/>
    </location>
</feature>
<keyword id="KW-0028">Amino-acid biosynthesis</keyword>
<keyword id="KW-0055">Arginine biosynthesis</keyword>
<keyword id="KW-0067">ATP-binding</keyword>
<keyword id="KW-0963">Cytoplasm</keyword>
<keyword id="KW-0418">Kinase</keyword>
<keyword id="KW-0547">Nucleotide-binding</keyword>
<keyword id="KW-0808">Transferase</keyword>
<reference key="1">
    <citation type="submission" date="2006-11" db="EMBL/GenBank/DDBJ databases">
        <title>Sequence of Campylobacter fetus subsp. fetus 82-40.</title>
        <authorList>
            <person name="Fouts D.E."/>
            <person name="Nelson K.E."/>
        </authorList>
    </citation>
    <scope>NUCLEOTIDE SEQUENCE [LARGE SCALE GENOMIC DNA]</scope>
    <source>
        <strain>82-40</strain>
    </source>
</reference>
<dbReference type="EC" id="2.7.2.8" evidence="1"/>
<dbReference type="EMBL" id="CP000487">
    <property type="protein sequence ID" value="ABK81796.1"/>
    <property type="molecule type" value="Genomic_DNA"/>
</dbReference>
<dbReference type="RefSeq" id="WP_002849668.1">
    <property type="nucleotide sequence ID" value="NC_008599.1"/>
</dbReference>
<dbReference type="SMR" id="A0RPV9"/>
<dbReference type="GeneID" id="61064908"/>
<dbReference type="KEGG" id="cff:CFF8240_1081"/>
<dbReference type="eggNOG" id="COG0548">
    <property type="taxonomic scope" value="Bacteria"/>
</dbReference>
<dbReference type="HOGENOM" id="CLU_053680_0_0_7"/>
<dbReference type="UniPathway" id="UPA00068">
    <property type="reaction ID" value="UER00107"/>
</dbReference>
<dbReference type="Proteomes" id="UP000000760">
    <property type="component" value="Chromosome"/>
</dbReference>
<dbReference type="GO" id="GO:0005737">
    <property type="term" value="C:cytoplasm"/>
    <property type="evidence" value="ECO:0007669"/>
    <property type="project" value="UniProtKB-SubCell"/>
</dbReference>
<dbReference type="GO" id="GO:0003991">
    <property type="term" value="F:acetylglutamate kinase activity"/>
    <property type="evidence" value="ECO:0007669"/>
    <property type="project" value="UniProtKB-UniRule"/>
</dbReference>
<dbReference type="GO" id="GO:0005524">
    <property type="term" value="F:ATP binding"/>
    <property type="evidence" value="ECO:0007669"/>
    <property type="project" value="UniProtKB-UniRule"/>
</dbReference>
<dbReference type="GO" id="GO:0042450">
    <property type="term" value="P:arginine biosynthetic process via ornithine"/>
    <property type="evidence" value="ECO:0007669"/>
    <property type="project" value="UniProtKB-UniRule"/>
</dbReference>
<dbReference type="GO" id="GO:0006526">
    <property type="term" value="P:L-arginine biosynthetic process"/>
    <property type="evidence" value="ECO:0007669"/>
    <property type="project" value="UniProtKB-UniPathway"/>
</dbReference>
<dbReference type="CDD" id="cd04250">
    <property type="entry name" value="AAK_NAGK-C"/>
    <property type="match status" value="1"/>
</dbReference>
<dbReference type="FunFam" id="3.40.1160.10:FF:000004">
    <property type="entry name" value="Acetylglutamate kinase"/>
    <property type="match status" value="1"/>
</dbReference>
<dbReference type="Gene3D" id="3.40.1160.10">
    <property type="entry name" value="Acetylglutamate kinase-like"/>
    <property type="match status" value="1"/>
</dbReference>
<dbReference type="HAMAP" id="MF_00082">
    <property type="entry name" value="ArgB"/>
    <property type="match status" value="1"/>
</dbReference>
<dbReference type="InterPro" id="IPR036393">
    <property type="entry name" value="AceGlu_kinase-like_sf"/>
</dbReference>
<dbReference type="InterPro" id="IPR004662">
    <property type="entry name" value="AcgluKinase_fam"/>
</dbReference>
<dbReference type="InterPro" id="IPR037528">
    <property type="entry name" value="ArgB"/>
</dbReference>
<dbReference type="InterPro" id="IPR001048">
    <property type="entry name" value="Asp/Glu/Uridylate_kinase"/>
</dbReference>
<dbReference type="InterPro" id="IPR001057">
    <property type="entry name" value="Glu/AcGlu_kinase"/>
</dbReference>
<dbReference type="InterPro" id="IPR041727">
    <property type="entry name" value="NAGK-C"/>
</dbReference>
<dbReference type="NCBIfam" id="TIGR00761">
    <property type="entry name" value="argB"/>
    <property type="match status" value="1"/>
</dbReference>
<dbReference type="PANTHER" id="PTHR23342">
    <property type="entry name" value="N-ACETYLGLUTAMATE SYNTHASE"/>
    <property type="match status" value="1"/>
</dbReference>
<dbReference type="PANTHER" id="PTHR23342:SF0">
    <property type="entry name" value="N-ACETYLGLUTAMATE SYNTHASE, MITOCHONDRIAL"/>
    <property type="match status" value="1"/>
</dbReference>
<dbReference type="Pfam" id="PF00696">
    <property type="entry name" value="AA_kinase"/>
    <property type="match status" value="1"/>
</dbReference>
<dbReference type="PIRSF" id="PIRSF000728">
    <property type="entry name" value="NAGK"/>
    <property type="match status" value="1"/>
</dbReference>
<dbReference type="PRINTS" id="PR00474">
    <property type="entry name" value="GLU5KINASE"/>
</dbReference>
<dbReference type="SUPFAM" id="SSF53633">
    <property type="entry name" value="Carbamate kinase-like"/>
    <property type="match status" value="1"/>
</dbReference>
<name>ARGB_CAMFF</name>
<protein>
    <recommendedName>
        <fullName evidence="1">Acetylglutamate kinase</fullName>
        <ecNumber evidence="1">2.7.2.8</ecNumber>
    </recommendedName>
    <alternativeName>
        <fullName evidence="1">N-acetyl-L-glutamate 5-phosphotransferase</fullName>
    </alternativeName>
    <alternativeName>
        <fullName evidence="1">NAG kinase</fullName>
        <shortName evidence="1">NAGK</shortName>
    </alternativeName>
</protein>